<organism>
    <name type="scientific">Cannabis sativa</name>
    <name type="common">Hemp</name>
    <name type="synonym">Marijuana</name>
    <dbReference type="NCBI Taxonomy" id="3483"/>
    <lineage>
        <taxon>Eukaryota</taxon>
        <taxon>Viridiplantae</taxon>
        <taxon>Streptophyta</taxon>
        <taxon>Embryophyta</taxon>
        <taxon>Tracheophyta</taxon>
        <taxon>Spermatophyta</taxon>
        <taxon>Magnoliopsida</taxon>
        <taxon>eudicotyledons</taxon>
        <taxon>Gunneridae</taxon>
        <taxon>Pentapetalae</taxon>
        <taxon>rosids</taxon>
        <taxon>fabids</taxon>
        <taxon>Rosales</taxon>
        <taxon>Cannabaceae</taxon>
        <taxon>Cannabis</taxon>
    </lineage>
</organism>
<keyword id="KW-0150">Chloroplast</keyword>
<keyword id="KW-0460">Magnesium</keyword>
<keyword id="KW-0472">Membrane</keyword>
<keyword id="KW-0479">Metal-binding</keyword>
<keyword id="KW-0934">Plastid</keyword>
<keyword id="KW-1185">Reference proteome</keyword>
<keyword id="KW-0793">Thylakoid</keyword>
<keyword id="KW-0808">Transferase</keyword>
<accession>A0A7J6FUX2</accession>
<accession>A0A1V0QSI1</accession>
<accession>A0A7J6E8K8</accession>
<accession>A0A803Q541</accession>
<proteinExistence type="evidence at transcript level"/>
<name>GGR2_CANSA</name>
<feature type="chain" id="PRO_0000460888" description="Heterodimeric geranylgeranyl pyrophosphate synthase small subunit 2, chloroplastic">
    <location>
        <begin position="1"/>
        <end position="287"/>
    </location>
</feature>
<feature type="binding site" evidence="1">
    <location>
        <position position="103"/>
    </location>
    <ligand>
        <name>Mg(2+)</name>
        <dbReference type="ChEBI" id="CHEBI:18420"/>
        <label>1</label>
    </ligand>
</feature>
<feature type="binding site" evidence="1">
    <location>
        <position position="103"/>
    </location>
    <ligand>
        <name>Mg(2+)</name>
        <dbReference type="ChEBI" id="CHEBI:18420"/>
        <label>2</label>
    </ligand>
</feature>
<feature type="binding site" evidence="1">
    <location>
        <position position="109"/>
    </location>
    <ligand>
        <name>Mg(2+)</name>
        <dbReference type="ChEBI" id="CHEBI:18420"/>
        <label>1</label>
    </ligand>
</feature>
<feature type="binding site" evidence="1">
    <location>
        <position position="109"/>
    </location>
    <ligand>
        <name>Mg(2+)</name>
        <dbReference type="ChEBI" id="CHEBI:18420"/>
        <label>2</label>
    </ligand>
</feature>
<feature type="binding site" evidence="2">
    <location>
        <position position="204"/>
    </location>
    <ligand>
        <name>dimethylallyl diphosphate</name>
        <dbReference type="ChEBI" id="CHEBI:57623"/>
    </ligand>
</feature>
<feature type="binding site" evidence="2">
    <location>
        <position position="241"/>
    </location>
    <ligand>
        <name>dimethylallyl diphosphate</name>
        <dbReference type="ChEBI" id="CHEBI:57623"/>
    </ligand>
</feature>
<feature type="binding site" evidence="2">
    <location>
        <position position="250"/>
    </location>
    <ligand>
        <name>dimethylallyl diphosphate</name>
        <dbReference type="ChEBI" id="CHEBI:57623"/>
    </ligand>
</feature>
<feature type="sequence conflict" description="In Ref. 1; KAF4354180." evidence="6" ref="1">
    <original>L</original>
    <variation>H</variation>
    <location>
        <position position="235"/>
    </location>
</feature>
<gene>
    <name evidence="5" type="primary">GPPS.ssu2</name>
    <name evidence="7" type="ORF">F8388_004192</name>
    <name evidence="8" type="ORF">G4B88_004816</name>
</gene>
<comment type="function">
    <text evidence="3">Heterodimeric geranyl(geranyl)-diphosphate (GPP) synthase small subunit (By similarity). The small subunit alone is inactive in vitro while the large subunit GGPPS1 catalyzes mainly the production of geranygeranyl-diphosphate in vitro (By similarity). Upon association of the two subunits, the product profile changes and the production of gerany-diphosphate is strongly increased (By similarity).</text>
</comment>
<comment type="cofactor">
    <cofactor evidence="2">
        <name>Mg(2+)</name>
        <dbReference type="ChEBI" id="CHEBI:18420"/>
    </cofactor>
    <text evidence="2">Binds 2 Mg(2+) ions per subunit.</text>
</comment>
<comment type="subunit">
    <text evidence="3">Part of a heterodimeric geranyl(geranyl)diphosphate synthase.</text>
</comment>
<comment type="subcellular location">
    <subcellularLocation>
        <location evidence="3">Plastid</location>
        <location evidence="3">Chloroplast thylakoid membrane</location>
        <topology evidence="3">Peripheral membrane protein</topology>
    </subcellularLocation>
</comment>
<comment type="tissue specificity">
    <text evidence="4">Mainly expressed in trichomes, and, to a lower extent, in roots, leaves, flowers and stems.</text>
</comment>
<comment type="similarity">
    <text evidence="6">Belongs to the FPP/GGPP synthase family.</text>
</comment>
<reference key="1">
    <citation type="submission" date="2020-03" db="EMBL/GenBank/DDBJ databases">
        <title>Sequence and annotation of 42 cannabis genomes reveals extensive copy number variation in cannabinoid synthesis and pathogen resistance genes.</title>
        <authorList>
            <person name="Mckernan K.J."/>
            <person name="Helbert Y."/>
            <person name="Kane L.T."/>
            <person name="Ebling H."/>
            <person name="Zhang L."/>
            <person name="Liu B."/>
            <person name="Eaton Z."/>
            <person name="Mclaughlin S."/>
            <person name="Kingan S."/>
            <person name="Baybayan P."/>
            <person name="Concepcion G."/>
            <person name="Jordan M."/>
            <person name="Riva A."/>
            <person name="Barbazuk W."/>
            <person name="Harkins T."/>
        </authorList>
    </citation>
    <scope>NUCLEOTIDE SEQUENCE [LARGE SCALE GENOMIC DNA]</scope>
    <source>
        <strain>cv. Jamaican Lion 4</strain>
        <tissue>Leaf</tissue>
    </source>
</reference>
<reference key="2">
    <citation type="journal article" date="2017" name="PLoS ONE">
        <title>Terpene synthases from Cannabis sativa.</title>
        <authorList>
            <person name="Booth J.K."/>
            <person name="Page J.E."/>
            <person name="Bohlmann J."/>
        </authorList>
    </citation>
    <scope>NUCLEOTIDE SEQUENCE [MRNA] OF 7-284</scope>
    <scope>TISSUE SPECIFICITY</scope>
    <source>
        <strain>cv. Finola</strain>
        <strain>cv. Purple Kush TPS13</strain>
    </source>
</reference>
<protein>
    <recommendedName>
        <fullName evidence="5">Heterodimeric geranylgeranyl pyrophosphate synthase small subunit 2, chloroplastic</fullName>
        <shortName evidence="5">CsGPPS.ssu2</shortName>
        <shortName evidence="5">GPPS small subunit 2</shortName>
    </recommendedName>
    <alternativeName>
        <fullName evidence="6">Geranylgeranyl pyrophosphate reductase GPPSsu 2</fullName>
    </alternativeName>
</protein>
<evidence type="ECO:0000250" key="1">
    <source>
        <dbReference type="UniProtKB" id="P14324"/>
    </source>
</evidence>
<evidence type="ECO:0000250" key="2">
    <source>
        <dbReference type="UniProtKB" id="Q12051"/>
    </source>
</evidence>
<evidence type="ECO:0000250" key="3">
    <source>
        <dbReference type="UniProtKB" id="Q39108"/>
    </source>
</evidence>
<evidence type="ECO:0000269" key="4">
    <source>
    </source>
</evidence>
<evidence type="ECO:0000303" key="5">
    <source>
    </source>
</evidence>
<evidence type="ECO:0000305" key="6"/>
<evidence type="ECO:0000312" key="7">
    <source>
        <dbReference type="EMBL" id="KAF4354180.1"/>
    </source>
</evidence>
<evidence type="ECO:0000312" key="8">
    <source>
        <dbReference type="EMBL" id="KAF4374564.1"/>
    </source>
</evidence>
<dbReference type="EMBL" id="JAATIP010000284">
    <property type="protein sequence ID" value="KAF4354180.1"/>
    <property type="molecule type" value="Genomic_DNA"/>
</dbReference>
<dbReference type="EMBL" id="JAATIQ010000167">
    <property type="protein sequence ID" value="KAF4374564.1"/>
    <property type="molecule type" value="Genomic_DNA"/>
</dbReference>
<dbReference type="EMBL" id="UZAU01000626">
    <property type="status" value="NOT_ANNOTATED_CDS"/>
    <property type="molecule type" value="Genomic_DNA"/>
</dbReference>
<dbReference type="EMBL" id="KY014583">
    <property type="protein sequence ID" value="ARE72278.1"/>
    <property type="molecule type" value="mRNA"/>
</dbReference>
<dbReference type="SMR" id="A0A7J6FUX2"/>
<dbReference type="OMA" id="HACGATC"/>
<dbReference type="OrthoDB" id="1923994at2759"/>
<dbReference type="Proteomes" id="UP000525078">
    <property type="component" value="Unassembled WGS sequence"/>
</dbReference>
<dbReference type="Proteomes" id="UP000583929">
    <property type="component" value="Unassembled WGS sequence"/>
</dbReference>
<dbReference type="Proteomes" id="UP000596661">
    <property type="component" value="Chromosome 7"/>
</dbReference>
<dbReference type="GO" id="GO:0009535">
    <property type="term" value="C:chloroplast thylakoid membrane"/>
    <property type="evidence" value="ECO:0007669"/>
    <property type="project" value="UniProtKB-SubCell"/>
</dbReference>
<dbReference type="GO" id="GO:0046872">
    <property type="term" value="F:metal ion binding"/>
    <property type="evidence" value="ECO:0007669"/>
    <property type="project" value="UniProtKB-KW"/>
</dbReference>
<dbReference type="GO" id="GO:0004659">
    <property type="term" value="F:prenyltransferase activity"/>
    <property type="evidence" value="ECO:0007669"/>
    <property type="project" value="InterPro"/>
</dbReference>
<dbReference type="GO" id="GO:0008299">
    <property type="term" value="P:isoprenoid biosynthetic process"/>
    <property type="evidence" value="ECO:0007669"/>
    <property type="project" value="InterPro"/>
</dbReference>
<dbReference type="CDD" id="cd00867">
    <property type="entry name" value="Trans_IPPS"/>
    <property type="match status" value="1"/>
</dbReference>
<dbReference type="Gene3D" id="1.10.600.10">
    <property type="entry name" value="Farnesyl Diphosphate Synthase"/>
    <property type="match status" value="1"/>
</dbReference>
<dbReference type="InterPro" id="IPR008949">
    <property type="entry name" value="Isoprenoid_synthase_dom_sf"/>
</dbReference>
<dbReference type="InterPro" id="IPR000092">
    <property type="entry name" value="Polyprenyl_synt"/>
</dbReference>
<dbReference type="PANTHER" id="PTHR43281">
    <property type="entry name" value="FARNESYL DIPHOSPHATE SYNTHASE"/>
    <property type="match status" value="1"/>
</dbReference>
<dbReference type="PANTHER" id="PTHR43281:SF6">
    <property type="entry name" value="HETERODIMERIC GERANYLGERANYL PYROPHOSPHATE SYNTHASE SMALL SUBUNIT, CHLOROPLASTIC-LIKE"/>
    <property type="match status" value="1"/>
</dbReference>
<dbReference type="Pfam" id="PF00348">
    <property type="entry name" value="polyprenyl_synt"/>
    <property type="match status" value="1"/>
</dbReference>
<dbReference type="SUPFAM" id="SSF48576">
    <property type="entry name" value="Terpenoid synthases"/>
    <property type="match status" value="1"/>
</dbReference>
<sequence length="287" mass="32105">MSSNFLHMPMTITMSSQNFQHHDHSSYFASITKDIEAHLKQSIIVKPPFTVYEPMYNLAFTTPPTSAPLLCVAACELVGGHRRQAVAAASSLHLMHVASFTHEHLPLTDRSNPNPMIHHAYNPNIELLIPDAIVPFGCELLTRLDNPIEDDHADRVLKVIVEITRAFGSQGIIDGQFHEKVVNRSNGEEENNNADWIDYTCRKKEGKLYACAATCGAILGGANEEEEEKLSKFGLYVGMIQGYSKIGRGKEEERLKRVEELTKLAIKELEHFKGRRVEEISSIILGP</sequence>